<name>CCS_ORYSJ</name>
<keyword id="KW-0143">Chaperone</keyword>
<keyword id="KW-0150">Chloroplast</keyword>
<keyword id="KW-0186">Copper</keyword>
<keyword id="KW-0479">Metal-binding</keyword>
<keyword id="KW-0934">Plastid</keyword>
<keyword id="KW-1185">Reference proteome</keyword>
<keyword id="KW-0809">Transit peptide</keyword>
<feature type="transit peptide" description="Chloroplast" evidence="2">
    <location>
        <begin position="1"/>
        <end position="78"/>
    </location>
</feature>
<feature type="chain" id="PRO_0000422803" description="Copper chaperone for superoxide dismutase, chloroplastic">
    <location>
        <begin position="79"/>
        <end position="312"/>
    </location>
</feature>
<feature type="domain" description="HMA" evidence="3">
    <location>
        <begin position="89"/>
        <end position="152"/>
    </location>
</feature>
<feature type="binding site" evidence="3">
    <location>
        <position position="100"/>
    </location>
    <ligand>
        <name>Cu cation</name>
        <dbReference type="ChEBI" id="CHEBI:23378"/>
        <label>1</label>
    </ligand>
</feature>
<feature type="binding site" evidence="3">
    <location>
        <position position="103"/>
    </location>
    <ligand>
        <name>Cu cation</name>
        <dbReference type="ChEBI" id="CHEBI:23378"/>
        <label>1</label>
    </ligand>
</feature>
<feature type="binding site">
    <location>
        <position position="301"/>
    </location>
    <ligand>
        <name>Cu cation</name>
        <dbReference type="ChEBI" id="CHEBI:23378"/>
        <label>2</label>
    </ligand>
</feature>
<feature type="binding site">
    <location>
        <position position="303"/>
    </location>
    <ligand>
        <name>Cu cation</name>
        <dbReference type="ChEBI" id="CHEBI:23378"/>
        <label>2</label>
    </ligand>
</feature>
<proteinExistence type="evidence at transcript level"/>
<sequence length="312" mass="32230">MVGFLRALTAASAVPAAAAVAAVALSTNSSSSSRLRLPSPASLPSLSSAYAAAPASGSARKPNAVPPMAAAAATADLSAAADKGAALPELMTEFMVDMKCDGCVTAVKNKFQTLEGIKNIEVDLNNQVVRVLGSLPVNTMLDTLHQTGRDARLIGQGNPNDFLVSAAVAEFKGPVIFGVVRLAQVNMELAIVEATFSGLSPGKHGWSINEFGDLTRGAESTGKVYNPSDYRSNKPLGDLGTLEAGEKGEAQFSASKEKLKVVDLIGRSIALYATEDRSDPGIAAAVIARSAGVGENYKKLCTCDGVTIWESS</sequence>
<protein>
    <recommendedName>
        <fullName>Copper chaperone for superoxide dismutase, chloroplastic</fullName>
    </recommendedName>
    <alternativeName>
        <fullName>Superoxide dismutase copper chaperone</fullName>
    </alternativeName>
</protein>
<dbReference type="EMBL" id="AL606640">
    <property type="protein sequence ID" value="CAD41661.3"/>
    <property type="molecule type" value="Genomic_DNA"/>
</dbReference>
<dbReference type="EMBL" id="AP008210">
    <property type="protein sequence ID" value="BAF15527.1"/>
    <property type="molecule type" value="Genomic_DNA"/>
</dbReference>
<dbReference type="EMBL" id="AP014960">
    <property type="protein sequence ID" value="BAS90588.1"/>
    <property type="molecule type" value="Genomic_DNA"/>
</dbReference>
<dbReference type="EMBL" id="CM000141">
    <property type="protein sequence ID" value="EAZ31700.1"/>
    <property type="molecule type" value="Genomic_DNA"/>
</dbReference>
<dbReference type="EMBL" id="AK120348">
    <property type="protein sequence ID" value="BAG99975.1"/>
    <property type="molecule type" value="mRNA"/>
</dbReference>
<dbReference type="RefSeq" id="XP_015635510.1">
    <property type="nucleotide sequence ID" value="XM_015780024.1"/>
</dbReference>
<dbReference type="SMR" id="Q7XTY9"/>
<dbReference type="FunCoup" id="Q7XTY9">
    <property type="interactions" value="1051"/>
</dbReference>
<dbReference type="STRING" id="39947.Q7XTY9"/>
<dbReference type="PaxDb" id="39947-Q7XTY9"/>
<dbReference type="EnsemblPlants" id="Os04t0573200-01">
    <property type="protein sequence ID" value="Os04t0573200-01"/>
    <property type="gene ID" value="Os04g0573200"/>
</dbReference>
<dbReference type="Gramene" id="Os04t0573200-01">
    <property type="protein sequence ID" value="Os04t0573200-01"/>
    <property type="gene ID" value="Os04g0573200"/>
</dbReference>
<dbReference type="KEGG" id="dosa:Os04g0573200"/>
<dbReference type="eggNOG" id="KOG4656">
    <property type="taxonomic scope" value="Eukaryota"/>
</dbReference>
<dbReference type="InParanoid" id="Q7XTY9"/>
<dbReference type="OMA" id="KNVWEER"/>
<dbReference type="OrthoDB" id="666972at2759"/>
<dbReference type="Proteomes" id="UP000000763">
    <property type="component" value="Chromosome 4"/>
</dbReference>
<dbReference type="Proteomes" id="UP000007752">
    <property type="component" value="Chromosome 4"/>
</dbReference>
<dbReference type="Proteomes" id="UP000059680">
    <property type="component" value="Chromosome 4"/>
</dbReference>
<dbReference type="ExpressionAtlas" id="Q7XTY9">
    <property type="expression patterns" value="baseline and differential"/>
</dbReference>
<dbReference type="GO" id="GO:0009507">
    <property type="term" value="C:chloroplast"/>
    <property type="evidence" value="ECO:0007669"/>
    <property type="project" value="UniProtKB-SubCell"/>
</dbReference>
<dbReference type="GO" id="GO:0005737">
    <property type="term" value="C:cytoplasm"/>
    <property type="evidence" value="ECO:0000318"/>
    <property type="project" value="GO_Central"/>
</dbReference>
<dbReference type="GO" id="GO:0005507">
    <property type="term" value="F:copper ion binding"/>
    <property type="evidence" value="ECO:0000318"/>
    <property type="project" value="GO_Central"/>
</dbReference>
<dbReference type="GO" id="GO:0016532">
    <property type="term" value="F:superoxide dismutase copper chaperone activity"/>
    <property type="evidence" value="ECO:0000318"/>
    <property type="project" value="GO_Central"/>
</dbReference>
<dbReference type="GO" id="GO:0019430">
    <property type="term" value="P:removal of superoxide radicals"/>
    <property type="evidence" value="ECO:0000318"/>
    <property type="project" value="GO_Central"/>
</dbReference>
<dbReference type="CDD" id="cd00371">
    <property type="entry name" value="HMA"/>
    <property type="match status" value="1"/>
</dbReference>
<dbReference type="FunFam" id="2.60.40.200:FF:000006">
    <property type="entry name" value="Copper chaperone for superoxide dismutase"/>
    <property type="match status" value="1"/>
</dbReference>
<dbReference type="FunFam" id="3.30.70.100:FF:000042">
    <property type="entry name" value="Copper chaperone for superoxide dismutase"/>
    <property type="match status" value="1"/>
</dbReference>
<dbReference type="Gene3D" id="3.30.70.100">
    <property type="match status" value="1"/>
</dbReference>
<dbReference type="Gene3D" id="2.60.40.200">
    <property type="entry name" value="Superoxide dismutase, copper/zinc binding domain"/>
    <property type="match status" value="1"/>
</dbReference>
<dbReference type="InterPro" id="IPR006121">
    <property type="entry name" value="HMA_dom"/>
</dbReference>
<dbReference type="InterPro" id="IPR036163">
    <property type="entry name" value="HMA_dom_sf"/>
</dbReference>
<dbReference type="InterPro" id="IPR036423">
    <property type="entry name" value="SOD-like_Cu/Zn_dom_sf"/>
</dbReference>
<dbReference type="InterPro" id="IPR024134">
    <property type="entry name" value="SOD_Cu/Zn_/chaperone"/>
</dbReference>
<dbReference type="InterPro" id="IPR001424">
    <property type="entry name" value="SOD_Cu_Zn_dom"/>
</dbReference>
<dbReference type="PANTHER" id="PTHR10003">
    <property type="entry name" value="SUPEROXIDE DISMUTASE CU-ZN -RELATED"/>
    <property type="match status" value="1"/>
</dbReference>
<dbReference type="Pfam" id="PF00403">
    <property type="entry name" value="HMA"/>
    <property type="match status" value="1"/>
</dbReference>
<dbReference type="Pfam" id="PF00080">
    <property type="entry name" value="Sod_Cu"/>
    <property type="match status" value="1"/>
</dbReference>
<dbReference type="SUPFAM" id="SSF49329">
    <property type="entry name" value="Cu,Zn superoxide dismutase-like"/>
    <property type="match status" value="1"/>
</dbReference>
<dbReference type="SUPFAM" id="SSF55008">
    <property type="entry name" value="HMA, heavy metal-associated domain"/>
    <property type="match status" value="1"/>
</dbReference>
<dbReference type="PROSITE" id="PS50846">
    <property type="entry name" value="HMA_2"/>
    <property type="match status" value="1"/>
</dbReference>
<organism>
    <name type="scientific">Oryza sativa subsp. japonica</name>
    <name type="common">Rice</name>
    <dbReference type="NCBI Taxonomy" id="39947"/>
    <lineage>
        <taxon>Eukaryota</taxon>
        <taxon>Viridiplantae</taxon>
        <taxon>Streptophyta</taxon>
        <taxon>Embryophyta</taxon>
        <taxon>Tracheophyta</taxon>
        <taxon>Spermatophyta</taxon>
        <taxon>Magnoliopsida</taxon>
        <taxon>Liliopsida</taxon>
        <taxon>Poales</taxon>
        <taxon>Poaceae</taxon>
        <taxon>BOP clade</taxon>
        <taxon>Oryzoideae</taxon>
        <taxon>Oryzeae</taxon>
        <taxon>Oryzinae</taxon>
        <taxon>Oryza</taxon>
        <taxon>Oryza sativa</taxon>
    </lineage>
</organism>
<reference key="1">
    <citation type="journal article" date="2002" name="Nature">
        <title>Sequence and analysis of rice chromosome 4.</title>
        <authorList>
            <person name="Feng Q."/>
            <person name="Zhang Y."/>
            <person name="Hao P."/>
            <person name="Wang S."/>
            <person name="Fu G."/>
            <person name="Huang Y."/>
            <person name="Li Y."/>
            <person name="Zhu J."/>
            <person name="Liu Y."/>
            <person name="Hu X."/>
            <person name="Jia P."/>
            <person name="Zhang Y."/>
            <person name="Zhao Q."/>
            <person name="Ying K."/>
            <person name="Yu S."/>
            <person name="Tang Y."/>
            <person name="Weng Q."/>
            <person name="Zhang L."/>
            <person name="Lu Y."/>
            <person name="Mu J."/>
            <person name="Lu Y."/>
            <person name="Zhang L.S."/>
            <person name="Yu Z."/>
            <person name="Fan D."/>
            <person name="Liu X."/>
            <person name="Lu T."/>
            <person name="Li C."/>
            <person name="Wu Y."/>
            <person name="Sun T."/>
            <person name="Lei H."/>
            <person name="Li T."/>
            <person name="Hu H."/>
            <person name="Guan J."/>
            <person name="Wu M."/>
            <person name="Zhang R."/>
            <person name="Zhou B."/>
            <person name="Chen Z."/>
            <person name="Chen L."/>
            <person name="Jin Z."/>
            <person name="Wang R."/>
            <person name="Yin H."/>
            <person name="Cai Z."/>
            <person name="Ren S."/>
            <person name="Lv G."/>
            <person name="Gu W."/>
            <person name="Zhu G."/>
            <person name="Tu Y."/>
            <person name="Jia J."/>
            <person name="Zhang Y."/>
            <person name="Chen J."/>
            <person name="Kang H."/>
            <person name="Chen X."/>
            <person name="Shao C."/>
            <person name="Sun Y."/>
            <person name="Hu Q."/>
            <person name="Zhang X."/>
            <person name="Zhang W."/>
            <person name="Wang L."/>
            <person name="Ding C."/>
            <person name="Sheng H."/>
            <person name="Gu J."/>
            <person name="Chen S."/>
            <person name="Ni L."/>
            <person name="Zhu F."/>
            <person name="Chen W."/>
            <person name="Lan L."/>
            <person name="Lai Y."/>
            <person name="Cheng Z."/>
            <person name="Gu M."/>
            <person name="Jiang J."/>
            <person name="Li J."/>
            <person name="Hong G."/>
            <person name="Xue Y."/>
            <person name="Han B."/>
        </authorList>
    </citation>
    <scope>NUCLEOTIDE SEQUENCE [LARGE SCALE GENOMIC DNA]</scope>
    <source>
        <strain>cv. Nipponbare</strain>
    </source>
</reference>
<reference key="2">
    <citation type="journal article" date="2005" name="Nature">
        <title>The map-based sequence of the rice genome.</title>
        <authorList>
            <consortium name="International rice genome sequencing project (IRGSP)"/>
        </authorList>
    </citation>
    <scope>NUCLEOTIDE SEQUENCE [LARGE SCALE GENOMIC DNA]</scope>
    <source>
        <strain>cv. Nipponbare</strain>
    </source>
</reference>
<reference key="3">
    <citation type="journal article" date="2008" name="Nucleic Acids Res.">
        <title>The rice annotation project database (RAP-DB): 2008 update.</title>
        <authorList>
            <consortium name="The rice annotation project (RAP)"/>
        </authorList>
    </citation>
    <scope>GENOME REANNOTATION</scope>
    <source>
        <strain>cv. Nipponbare</strain>
    </source>
</reference>
<reference key="4">
    <citation type="journal article" date="2013" name="Rice">
        <title>Improvement of the Oryza sativa Nipponbare reference genome using next generation sequence and optical map data.</title>
        <authorList>
            <person name="Kawahara Y."/>
            <person name="de la Bastide M."/>
            <person name="Hamilton J.P."/>
            <person name="Kanamori H."/>
            <person name="McCombie W.R."/>
            <person name="Ouyang S."/>
            <person name="Schwartz D.C."/>
            <person name="Tanaka T."/>
            <person name="Wu J."/>
            <person name="Zhou S."/>
            <person name="Childs K.L."/>
            <person name="Davidson R.M."/>
            <person name="Lin H."/>
            <person name="Quesada-Ocampo L."/>
            <person name="Vaillancourt B."/>
            <person name="Sakai H."/>
            <person name="Lee S.S."/>
            <person name="Kim J."/>
            <person name="Numa H."/>
            <person name="Itoh T."/>
            <person name="Buell C.R."/>
            <person name="Matsumoto T."/>
        </authorList>
    </citation>
    <scope>GENOME REANNOTATION</scope>
    <source>
        <strain>cv. Nipponbare</strain>
    </source>
</reference>
<reference key="5">
    <citation type="journal article" date="2005" name="PLoS Biol.">
        <title>The genomes of Oryza sativa: a history of duplications.</title>
        <authorList>
            <person name="Yu J."/>
            <person name="Wang J."/>
            <person name="Lin W."/>
            <person name="Li S."/>
            <person name="Li H."/>
            <person name="Zhou J."/>
            <person name="Ni P."/>
            <person name="Dong W."/>
            <person name="Hu S."/>
            <person name="Zeng C."/>
            <person name="Zhang J."/>
            <person name="Zhang Y."/>
            <person name="Li R."/>
            <person name="Xu Z."/>
            <person name="Li S."/>
            <person name="Li X."/>
            <person name="Zheng H."/>
            <person name="Cong L."/>
            <person name="Lin L."/>
            <person name="Yin J."/>
            <person name="Geng J."/>
            <person name="Li G."/>
            <person name="Shi J."/>
            <person name="Liu J."/>
            <person name="Lv H."/>
            <person name="Li J."/>
            <person name="Wang J."/>
            <person name="Deng Y."/>
            <person name="Ran L."/>
            <person name="Shi X."/>
            <person name="Wang X."/>
            <person name="Wu Q."/>
            <person name="Li C."/>
            <person name="Ren X."/>
            <person name="Wang J."/>
            <person name="Wang X."/>
            <person name="Li D."/>
            <person name="Liu D."/>
            <person name="Zhang X."/>
            <person name="Ji Z."/>
            <person name="Zhao W."/>
            <person name="Sun Y."/>
            <person name="Zhang Z."/>
            <person name="Bao J."/>
            <person name="Han Y."/>
            <person name="Dong L."/>
            <person name="Ji J."/>
            <person name="Chen P."/>
            <person name="Wu S."/>
            <person name="Liu J."/>
            <person name="Xiao Y."/>
            <person name="Bu D."/>
            <person name="Tan J."/>
            <person name="Yang L."/>
            <person name="Ye C."/>
            <person name="Zhang J."/>
            <person name="Xu J."/>
            <person name="Zhou Y."/>
            <person name="Yu Y."/>
            <person name="Zhang B."/>
            <person name="Zhuang S."/>
            <person name="Wei H."/>
            <person name="Liu B."/>
            <person name="Lei M."/>
            <person name="Yu H."/>
            <person name="Li Y."/>
            <person name="Xu H."/>
            <person name="Wei S."/>
            <person name="He X."/>
            <person name="Fang L."/>
            <person name="Zhang Z."/>
            <person name="Zhang Y."/>
            <person name="Huang X."/>
            <person name="Su Z."/>
            <person name="Tong W."/>
            <person name="Li J."/>
            <person name="Tong Z."/>
            <person name="Li S."/>
            <person name="Ye J."/>
            <person name="Wang L."/>
            <person name="Fang L."/>
            <person name="Lei T."/>
            <person name="Chen C.-S."/>
            <person name="Chen H.-C."/>
            <person name="Xu Z."/>
            <person name="Li H."/>
            <person name="Huang H."/>
            <person name="Zhang F."/>
            <person name="Xu H."/>
            <person name="Li N."/>
            <person name="Zhao C."/>
            <person name="Li S."/>
            <person name="Dong L."/>
            <person name="Huang Y."/>
            <person name="Li L."/>
            <person name="Xi Y."/>
            <person name="Qi Q."/>
            <person name="Li W."/>
            <person name="Zhang B."/>
            <person name="Hu W."/>
            <person name="Zhang Y."/>
            <person name="Tian X."/>
            <person name="Jiao Y."/>
            <person name="Liang X."/>
            <person name="Jin J."/>
            <person name="Gao L."/>
            <person name="Zheng W."/>
            <person name="Hao B."/>
            <person name="Liu S.-M."/>
            <person name="Wang W."/>
            <person name="Yuan L."/>
            <person name="Cao M."/>
            <person name="McDermott J."/>
            <person name="Samudrala R."/>
            <person name="Wang J."/>
            <person name="Wong G.K.-S."/>
            <person name="Yang H."/>
        </authorList>
    </citation>
    <scope>NUCLEOTIDE SEQUENCE [LARGE SCALE GENOMIC DNA]</scope>
    <source>
        <strain>cv. Nipponbare</strain>
    </source>
</reference>
<reference key="6">
    <citation type="journal article" date="2003" name="Science">
        <title>Collection, mapping, and annotation of over 28,000 cDNA clones from japonica rice.</title>
        <authorList>
            <consortium name="The rice full-length cDNA consortium"/>
        </authorList>
    </citation>
    <scope>NUCLEOTIDE SEQUENCE [LARGE SCALE MRNA]</scope>
    <source>
        <strain>cv. Nipponbare</strain>
    </source>
</reference>
<gene>
    <name type="primary">CCS</name>
    <name type="ordered locus">Os04g0573200</name>
    <name type="ordered locus">LOC_Os04g48410</name>
    <name type="ORF">OsJ_15850</name>
    <name type="ORF">OSJNBa0019K04.8</name>
</gene>
<comment type="function">
    <text evidence="1">Copper chaperone for superoxide dismutases (SODs). Binds copper ions and delivers them specifically to SODs. Is required for assistance in SODs disulfide bond formation and thereby activation of SODs (By similarity).</text>
</comment>
<comment type="cofactor">
    <cofactor evidence="3">
        <name>Cu(2+)</name>
        <dbReference type="ChEBI" id="CHEBI:29036"/>
    </cofactor>
    <text evidence="3">Binds 2 copper ions per subunit.</text>
</comment>
<comment type="subcellular location">
    <subcellularLocation>
        <location evidence="4">Plastid</location>
        <location evidence="4">Chloroplast</location>
    </subcellularLocation>
</comment>
<comment type="similarity">
    <text evidence="4">In the C-terminal section; belongs to the Cu-Zn superoxide dismutase family.</text>
</comment>
<evidence type="ECO:0000250" key="1"/>
<evidence type="ECO:0000255" key="2"/>
<evidence type="ECO:0000255" key="3">
    <source>
        <dbReference type="PROSITE-ProRule" id="PRU00280"/>
    </source>
</evidence>
<evidence type="ECO:0000305" key="4"/>
<accession>Q7XTY9</accession>
<accession>A0A0P0WDV3</accession>